<comment type="function">
    <text evidence="1">Catalyzes the four-electron oxidation of UDP-N-acetyl-D-mannosamine (UDP-ManNAc), reducing NAD(+) and releasing UDP-N-acetylmannosaminuronic acid (UDP-ManNAcA).</text>
</comment>
<comment type="catalytic activity">
    <reaction evidence="1">
        <text>UDP-N-acetyl-alpha-D-mannosamine + 2 NAD(+) + H2O = UDP-N-acetyl-alpha-D-mannosaminouronate + 2 NADH + 3 H(+)</text>
        <dbReference type="Rhea" id="RHEA:25780"/>
        <dbReference type="ChEBI" id="CHEBI:15377"/>
        <dbReference type="ChEBI" id="CHEBI:15378"/>
        <dbReference type="ChEBI" id="CHEBI:57540"/>
        <dbReference type="ChEBI" id="CHEBI:57945"/>
        <dbReference type="ChEBI" id="CHEBI:68623"/>
        <dbReference type="ChEBI" id="CHEBI:70731"/>
        <dbReference type="EC" id="1.1.1.336"/>
    </reaction>
</comment>
<comment type="pathway">
    <text evidence="1">Bacterial outer membrane biogenesis; enterobacterial common antigen biosynthesis.</text>
</comment>
<comment type="subunit">
    <text evidence="1">Homodimer.</text>
</comment>
<comment type="similarity">
    <text evidence="1">Belongs to the UDP-glucose/GDP-mannose dehydrogenase family. WecC subfamily.</text>
</comment>
<protein>
    <recommendedName>
        <fullName evidence="1">UDP-N-acetyl-D-mannosamine dehydrogenase</fullName>
        <ecNumber evidence="1">1.1.1.336</ecNumber>
    </recommendedName>
    <alternativeName>
        <fullName evidence="1">UDP-ManNAc 6-dehydrogenase</fullName>
    </alternativeName>
</protein>
<gene>
    <name evidence="1" type="primary">wecC</name>
    <name type="synonym">rffD</name>
    <name type="ordered locus">SF3861</name>
    <name type="ordered locus">S3899</name>
</gene>
<accession>P67067</accession>
<accession>Q8XAR7</accession>
<organism>
    <name type="scientific">Shigella flexneri</name>
    <dbReference type="NCBI Taxonomy" id="623"/>
    <lineage>
        <taxon>Bacteria</taxon>
        <taxon>Pseudomonadati</taxon>
        <taxon>Pseudomonadota</taxon>
        <taxon>Gammaproteobacteria</taxon>
        <taxon>Enterobacterales</taxon>
        <taxon>Enterobacteriaceae</taxon>
        <taxon>Shigella</taxon>
    </lineage>
</organism>
<reference key="1">
    <citation type="journal article" date="2002" name="Nucleic Acids Res.">
        <title>Genome sequence of Shigella flexneri 2a: insights into pathogenicity through comparison with genomes of Escherichia coli K12 and O157.</title>
        <authorList>
            <person name="Jin Q."/>
            <person name="Yuan Z."/>
            <person name="Xu J."/>
            <person name="Wang Y."/>
            <person name="Shen Y."/>
            <person name="Lu W."/>
            <person name="Wang J."/>
            <person name="Liu H."/>
            <person name="Yang J."/>
            <person name="Yang F."/>
            <person name="Zhang X."/>
            <person name="Zhang J."/>
            <person name="Yang G."/>
            <person name="Wu H."/>
            <person name="Qu D."/>
            <person name="Dong J."/>
            <person name="Sun L."/>
            <person name="Xue Y."/>
            <person name="Zhao A."/>
            <person name="Gao Y."/>
            <person name="Zhu J."/>
            <person name="Kan B."/>
            <person name="Ding K."/>
            <person name="Chen S."/>
            <person name="Cheng H."/>
            <person name="Yao Z."/>
            <person name="He B."/>
            <person name="Chen R."/>
            <person name="Ma D."/>
            <person name="Qiang B."/>
            <person name="Wen Y."/>
            <person name="Hou Y."/>
            <person name="Yu J."/>
        </authorList>
    </citation>
    <scope>NUCLEOTIDE SEQUENCE [LARGE SCALE GENOMIC DNA]</scope>
    <source>
        <strain>301 / Serotype 2a</strain>
    </source>
</reference>
<reference key="2">
    <citation type="journal article" date="2003" name="Infect. Immun.">
        <title>Complete genome sequence and comparative genomics of Shigella flexneri serotype 2a strain 2457T.</title>
        <authorList>
            <person name="Wei J."/>
            <person name="Goldberg M.B."/>
            <person name="Burland V."/>
            <person name="Venkatesan M.M."/>
            <person name="Deng W."/>
            <person name="Fournier G."/>
            <person name="Mayhew G.F."/>
            <person name="Plunkett G. III"/>
            <person name="Rose D.J."/>
            <person name="Darling A."/>
            <person name="Mau B."/>
            <person name="Perna N.T."/>
            <person name="Payne S.M."/>
            <person name="Runyen-Janecky L.J."/>
            <person name="Zhou S."/>
            <person name="Schwartz D.C."/>
            <person name="Blattner F.R."/>
        </authorList>
    </citation>
    <scope>NUCLEOTIDE SEQUENCE [LARGE SCALE GENOMIC DNA]</scope>
    <source>
        <strain>ATCC 700930 / 2457T / Serotype 2a</strain>
    </source>
</reference>
<feature type="chain" id="PRO_0000074081" description="UDP-N-acetyl-D-mannosamine dehydrogenase">
    <location>
        <begin position="1"/>
        <end position="420"/>
    </location>
</feature>
<feature type="active site" description="Proton donor/acceptor" evidence="1">
    <location>
        <position position="212"/>
    </location>
</feature>
<feature type="active site" description="Nucleophile" evidence="1">
    <location>
        <position position="266"/>
    </location>
</feature>
<feature type="binding site" description="in chain A" evidence="1">
    <location>
        <position position="13"/>
    </location>
    <ligand>
        <name>NAD(+)</name>
        <dbReference type="ChEBI" id="CHEBI:57540"/>
        <note>ligand shared between homodimeric partners</note>
    </ligand>
</feature>
<feature type="binding site" description="in chain A" evidence="1">
    <location>
        <position position="14"/>
    </location>
    <ligand>
        <name>NAD(+)</name>
        <dbReference type="ChEBI" id="CHEBI:57540"/>
        <note>ligand shared between homodimeric partners</note>
    </ligand>
</feature>
<feature type="binding site" description="in chain A" evidence="1">
    <location>
        <position position="33"/>
    </location>
    <ligand>
        <name>NAD(+)</name>
        <dbReference type="ChEBI" id="CHEBI:57540"/>
        <note>ligand shared between homodimeric partners</note>
    </ligand>
</feature>
<feature type="binding site" description="in chain A" evidence="1">
    <location>
        <position position="85"/>
    </location>
    <ligand>
        <name>NAD(+)</name>
        <dbReference type="ChEBI" id="CHEBI:57540"/>
        <note>ligand shared between homodimeric partners</note>
    </ligand>
</feature>
<feature type="binding site" description="in chain A" evidence="1">
    <location>
        <position position="126"/>
    </location>
    <ligand>
        <name>NAD(+)</name>
        <dbReference type="ChEBI" id="CHEBI:57540"/>
        <note>ligand shared between homodimeric partners</note>
    </ligand>
</feature>
<feature type="binding site" description="in chain A" evidence="1">
    <location>
        <position position="160"/>
    </location>
    <ligand>
        <name>UDP-N-acetyl-alpha-D-mannosaminouronate</name>
        <dbReference type="ChEBI" id="CHEBI:70731"/>
        <note>ligand shared between homodimeric partners</note>
    </ligand>
</feature>
<feature type="binding site" description="in chain A" evidence="1">
    <location>
        <position position="161"/>
    </location>
    <ligand>
        <name>UDP-N-acetyl-alpha-D-mannosaminouronate</name>
        <dbReference type="ChEBI" id="CHEBI:70731"/>
        <note>ligand shared between homodimeric partners</note>
    </ligand>
</feature>
<feature type="binding site" description="in chain A" evidence="1">
    <location>
        <position position="212"/>
    </location>
    <ligand>
        <name>UDP-N-acetyl-alpha-D-mannosaminouronate</name>
        <dbReference type="ChEBI" id="CHEBI:70731"/>
        <note>ligand shared between homodimeric partners</note>
    </ligand>
</feature>
<feature type="binding site" description="in chain A" evidence="1">
    <location>
        <position position="216"/>
    </location>
    <ligand>
        <name>UDP-N-acetyl-alpha-D-mannosaminouronate</name>
        <dbReference type="ChEBI" id="CHEBI:70731"/>
        <note>ligand shared between homodimeric partners</note>
    </ligand>
</feature>
<feature type="binding site" description="in chain A" evidence="1">
    <location>
        <position position="219"/>
    </location>
    <ligand>
        <name>UDP-N-acetyl-alpha-D-mannosaminouronate</name>
        <dbReference type="ChEBI" id="CHEBI:70731"/>
        <note>ligand shared between homodimeric partners</note>
    </ligand>
</feature>
<feature type="binding site" description="in chain B" evidence="1">
    <location>
        <position position="250"/>
    </location>
    <ligand>
        <name>UDP-N-acetyl-alpha-D-mannosaminouronate</name>
        <dbReference type="ChEBI" id="CHEBI:70731"/>
        <note>ligand shared between homodimeric partners</note>
    </ligand>
</feature>
<feature type="binding site" description="in chain B" evidence="1">
    <location>
        <position position="252"/>
    </location>
    <ligand>
        <name>UDP-N-acetyl-alpha-D-mannosaminouronate</name>
        <dbReference type="ChEBI" id="CHEBI:70731"/>
        <note>ligand shared between homodimeric partners</note>
    </ligand>
</feature>
<feature type="binding site" description="in chain A" evidence="1">
    <location>
        <position position="263"/>
    </location>
    <ligand>
        <name>UDP-N-acetyl-alpha-D-mannosaminouronate</name>
        <dbReference type="ChEBI" id="CHEBI:70731"/>
        <note>ligand shared between homodimeric partners</note>
    </ligand>
</feature>
<feature type="binding site" description="in chain A" evidence="1">
    <location>
        <position position="330"/>
    </location>
    <ligand>
        <name>UDP-N-acetyl-alpha-D-mannosaminouronate</name>
        <dbReference type="ChEBI" id="CHEBI:70731"/>
        <note>ligand shared between homodimeric partners</note>
    </ligand>
</feature>
<feature type="binding site" description="in chain A" evidence="1">
    <location>
        <position position="331"/>
    </location>
    <ligand>
        <name>UDP-N-acetyl-alpha-D-mannosaminouronate</name>
        <dbReference type="ChEBI" id="CHEBI:70731"/>
        <note>ligand shared between homodimeric partners</note>
    </ligand>
</feature>
<feature type="binding site" description="in chain B" evidence="1">
    <location>
        <position position="338"/>
    </location>
    <ligand>
        <name>NAD(+)</name>
        <dbReference type="ChEBI" id="CHEBI:57540"/>
        <note>ligand shared between homodimeric partners</note>
    </ligand>
</feature>
<feature type="binding site" description="in chain A" evidence="1">
    <location>
        <position position="416"/>
    </location>
    <ligand>
        <name>UDP-N-acetyl-alpha-D-mannosaminouronate</name>
        <dbReference type="ChEBI" id="CHEBI:70731"/>
        <note>ligand shared between homodimeric partners</note>
    </ligand>
</feature>
<keyword id="KW-0520">NAD</keyword>
<keyword id="KW-0560">Oxidoreductase</keyword>
<keyword id="KW-1185">Reference proteome</keyword>
<name>WECC_SHIFL</name>
<dbReference type="EC" id="1.1.1.336" evidence="1"/>
<dbReference type="EMBL" id="AE005674">
    <property type="protein sequence ID" value="AAN45298.1"/>
    <property type="molecule type" value="Genomic_DNA"/>
</dbReference>
<dbReference type="EMBL" id="AE014073">
    <property type="protein sequence ID" value="AAP18900.1"/>
    <property type="molecule type" value="Genomic_DNA"/>
</dbReference>
<dbReference type="RefSeq" id="NP_709591.1">
    <property type="nucleotide sequence ID" value="NC_004337.2"/>
</dbReference>
<dbReference type="RefSeq" id="WP_000006621.1">
    <property type="nucleotide sequence ID" value="NZ_WPGW01000028.1"/>
</dbReference>
<dbReference type="SMR" id="P67067"/>
<dbReference type="STRING" id="198214.SF3861"/>
<dbReference type="PaxDb" id="198214-SF3861"/>
<dbReference type="GeneID" id="1026028"/>
<dbReference type="GeneID" id="75174019"/>
<dbReference type="KEGG" id="sfl:SF3861"/>
<dbReference type="KEGG" id="sfx:S3899"/>
<dbReference type="PATRIC" id="fig|198214.7.peg.4551"/>
<dbReference type="HOGENOM" id="CLU_023810_3_2_6"/>
<dbReference type="UniPathway" id="UPA00566"/>
<dbReference type="Proteomes" id="UP000001006">
    <property type="component" value="Chromosome"/>
</dbReference>
<dbReference type="Proteomes" id="UP000002673">
    <property type="component" value="Chromosome"/>
</dbReference>
<dbReference type="GO" id="GO:0051287">
    <property type="term" value="F:NAD binding"/>
    <property type="evidence" value="ECO:0007669"/>
    <property type="project" value="InterPro"/>
</dbReference>
<dbReference type="GO" id="GO:0016628">
    <property type="term" value="F:oxidoreductase activity, acting on the CH-CH group of donors, NAD or NADP as acceptor"/>
    <property type="evidence" value="ECO:0007669"/>
    <property type="project" value="InterPro"/>
</dbReference>
<dbReference type="GO" id="GO:0089714">
    <property type="term" value="F:UDP-N-acetyl-D-mannosamine dehydrogenase activity"/>
    <property type="evidence" value="ECO:0007669"/>
    <property type="project" value="UniProtKB-UniRule"/>
</dbReference>
<dbReference type="GO" id="GO:0009246">
    <property type="term" value="P:enterobacterial common antigen biosynthetic process"/>
    <property type="evidence" value="ECO:0007669"/>
    <property type="project" value="UniProtKB-UniRule"/>
</dbReference>
<dbReference type="FunFam" id="3.40.50.720:FF:000139">
    <property type="entry name" value="UDP-N-acetyl-D-mannosamine dehydrogenase"/>
    <property type="match status" value="1"/>
</dbReference>
<dbReference type="FunFam" id="3.40.50.720:FF:000235">
    <property type="entry name" value="UDP-N-acetyl-D-mannosamine dehydrogenase"/>
    <property type="match status" value="1"/>
</dbReference>
<dbReference type="Gene3D" id="1.20.5.100">
    <property type="entry name" value="Cytochrome c1, transmembrane anchor, C-terminal"/>
    <property type="match status" value="1"/>
</dbReference>
<dbReference type="Gene3D" id="3.40.50.720">
    <property type="entry name" value="NAD(P)-binding Rossmann-like Domain"/>
    <property type="match status" value="2"/>
</dbReference>
<dbReference type="HAMAP" id="MF_02029">
    <property type="entry name" value="WecC_RffD"/>
    <property type="match status" value="1"/>
</dbReference>
<dbReference type="InterPro" id="IPR008927">
    <property type="entry name" value="6-PGluconate_DH-like_C_sf"/>
</dbReference>
<dbReference type="InterPro" id="IPR036291">
    <property type="entry name" value="NAD(P)-bd_dom_sf"/>
</dbReference>
<dbReference type="InterPro" id="IPR017476">
    <property type="entry name" value="UDP-Glc/GDP-Man"/>
</dbReference>
<dbReference type="InterPro" id="IPR014027">
    <property type="entry name" value="UDP-Glc/GDP-Man_DH_C"/>
</dbReference>
<dbReference type="InterPro" id="IPR036220">
    <property type="entry name" value="UDP-Glc/GDP-Man_DH_C_sf"/>
</dbReference>
<dbReference type="InterPro" id="IPR014026">
    <property type="entry name" value="UDP-Glc/GDP-Man_DH_dimer"/>
</dbReference>
<dbReference type="InterPro" id="IPR001732">
    <property type="entry name" value="UDP-Glc/GDP-Man_DH_N"/>
</dbReference>
<dbReference type="InterPro" id="IPR028359">
    <property type="entry name" value="UDP_ManNAc/GlcNAc_DH"/>
</dbReference>
<dbReference type="InterPro" id="IPR032891">
    <property type="entry name" value="WecC"/>
</dbReference>
<dbReference type="NCBIfam" id="TIGR03026">
    <property type="entry name" value="NDP-sugDHase"/>
    <property type="match status" value="1"/>
</dbReference>
<dbReference type="NCBIfam" id="NF008286">
    <property type="entry name" value="PRK11064.1"/>
    <property type="match status" value="1"/>
</dbReference>
<dbReference type="PANTHER" id="PTHR43491">
    <property type="entry name" value="UDP-N-ACETYL-D-MANNOSAMINE DEHYDROGENASE"/>
    <property type="match status" value="1"/>
</dbReference>
<dbReference type="PANTHER" id="PTHR43491:SF1">
    <property type="entry name" value="UDP-N-ACETYL-D-MANNOSAMINE DEHYDROGENASE"/>
    <property type="match status" value="1"/>
</dbReference>
<dbReference type="Pfam" id="PF00984">
    <property type="entry name" value="UDPG_MGDP_dh"/>
    <property type="match status" value="1"/>
</dbReference>
<dbReference type="Pfam" id="PF03720">
    <property type="entry name" value="UDPG_MGDP_dh_C"/>
    <property type="match status" value="1"/>
</dbReference>
<dbReference type="Pfam" id="PF03721">
    <property type="entry name" value="UDPG_MGDP_dh_N"/>
    <property type="match status" value="1"/>
</dbReference>
<dbReference type="PIRSF" id="PIRSF500136">
    <property type="entry name" value="UDP_ManNAc_DH"/>
    <property type="match status" value="1"/>
</dbReference>
<dbReference type="PIRSF" id="PIRSF000124">
    <property type="entry name" value="UDPglc_GDPman_dh"/>
    <property type="match status" value="1"/>
</dbReference>
<dbReference type="SMART" id="SM00984">
    <property type="entry name" value="UDPG_MGDP_dh_C"/>
    <property type="match status" value="1"/>
</dbReference>
<dbReference type="SUPFAM" id="SSF48179">
    <property type="entry name" value="6-phosphogluconate dehydrogenase C-terminal domain-like"/>
    <property type="match status" value="1"/>
</dbReference>
<dbReference type="SUPFAM" id="SSF51735">
    <property type="entry name" value="NAD(P)-binding Rossmann-fold domains"/>
    <property type="match status" value="1"/>
</dbReference>
<dbReference type="SUPFAM" id="SSF52413">
    <property type="entry name" value="UDP-glucose/GDP-mannose dehydrogenase C-terminal domain"/>
    <property type="match status" value="1"/>
</dbReference>
<sequence length="420" mass="45839">MSFATISVIGLGYIGLPTAAAFASRQKQVIGVDINQHAVDTINRGEIHIVEPDLASVVKTAVEGGFLRASTTPVEADAWLIAVPTPFKGDHEPDMTYVESAARSIAPVLKKGALVILESTSPVGSTEKMAEWLAEMRPDLTFPQQVGEQADVNIAYCPERVLPGQVMVELIKNDRVIGGMTPVCSARASELYKIFLEGECVVTNSRTAEMCKLTENSFRDVNIAFANELSLICADQGINVWELIRLANRHPRVNILQPGPGVGGHCIAVDPWFIVAQNPQQARLIRTAREVNDHKPFWVIDQVKAAVADCLAATDKRASELKIACFGLAFKPNIDDLRESPAMEIAELIAQWHSGETLVVEPNIHQLPKKLTGLCTLAQLDEALATADVLVMLVDHSQFKVINGDNVHQQYVVDAKGVWR</sequence>
<evidence type="ECO:0000255" key="1">
    <source>
        <dbReference type="HAMAP-Rule" id="MF_02029"/>
    </source>
</evidence>
<proteinExistence type="inferred from homology"/>